<comment type="function">
    <text evidence="1">May be involved in cooperative interactions with calmodulins or calmodulin-like proteins (By similarity). Recruits calmodulin proteins to microtubules, thus being a potential scaffold in cellular signaling and trafficking (By similarity). May associate with nucleic acids and regulate gene expression at the transcriptional or post-transcriptional level (By similarity).</text>
</comment>
<comment type="subunit">
    <text evidence="1">Binds to multiple calmodulin (CaM) in the presence of Ca(2+) and CaM-like proteins.</text>
</comment>
<comment type="subcellular location">
    <subcellularLocation>
        <location evidence="3 5">Nucleus</location>
    </subcellularLocation>
    <subcellularLocation>
        <location evidence="5">Nucleus</location>
        <location evidence="5">Nucleolus</location>
    </subcellularLocation>
    <subcellularLocation>
        <location evidence="5">Cytoplasm</location>
        <location evidence="5">Cytoskeleton</location>
    </subcellularLocation>
    <subcellularLocation>
        <location evidence="5">Cell membrane</location>
    </subcellularLocation>
</comment>
<comment type="similarity">
    <text evidence="7">Belongs to the IQD family.</text>
</comment>
<dbReference type="EMBL" id="AB016880">
    <property type="protein sequence ID" value="BAB10169.1"/>
    <property type="molecule type" value="Genomic_DNA"/>
</dbReference>
<dbReference type="EMBL" id="CP002688">
    <property type="protein sequence ID" value="AED97558.1"/>
    <property type="molecule type" value="Genomic_DNA"/>
</dbReference>
<dbReference type="EMBL" id="AY050323">
    <property type="protein sequence ID" value="AAK91340.1"/>
    <property type="molecule type" value="mRNA"/>
</dbReference>
<dbReference type="EMBL" id="AY143917">
    <property type="protein sequence ID" value="AAN28856.1"/>
    <property type="molecule type" value="mRNA"/>
</dbReference>
<dbReference type="EMBL" id="AY088396">
    <property type="protein sequence ID" value="AAM65934.1"/>
    <property type="molecule type" value="mRNA"/>
</dbReference>
<dbReference type="RefSeq" id="NP_201013.1">
    <property type="nucleotide sequence ID" value="NM_125600.3"/>
</dbReference>
<dbReference type="SMR" id="Q9FIT1"/>
<dbReference type="FunCoup" id="Q9FIT1">
    <property type="interactions" value="33"/>
</dbReference>
<dbReference type="IntAct" id="Q9FIT1">
    <property type="interactions" value="3"/>
</dbReference>
<dbReference type="STRING" id="3702.Q9FIT1"/>
<dbReference type="iPTMnet" id="Q9FIT1"/>
<dbReference type="PaxDb" id="3702-AT5G62070.1"/>
<dbReference type="ProteomicsDB" id="185506"/>
<dbReference type="EnsemblPlants" id="AT5G62070.1">
    <property type="protein sequence ID" value="AT5G62070.1"/>
    <property type="gene ID" value="AT5G62070"/>
</dbReference>
<dbReference type="GeneID" id="836327"/>
<dbReference type="Gramene" id="AT5G62070.1">
    <property type="protein sequence ID" value="AT5G62070.1"/>
    <property type="gene ID" value="AT5G62070"/>
</dbReference>
<dbReference type="KEGG" id="ath:AT5G62070"/>
<dbReference type="Araport" id="AT5G62070"/>
<dbReference type="TAIR" id="AT5G62070">
    <property type="gene designation" value="IQD23"/>
</dbReference>
<dbReference type="eggNOG" id="ENOG502QUBM">
    <property type="taxonomic scope" value="Eukaryota"/>
</dbReference>
<dbReference type="HOGENOM" id="CLU_042730_1_1_1"/>
<dbReference type="InParanoid" id="Q9FIT1"/>
<dbReference type="OMA" id="TWKPHYH"/>
<dbReference type="OrthoDB" id="1686972at2759"/>
<dbReference type="PhylomeDB" id="Q9FIT1"/>
<dbReference type="PRO" id="PR:Q9FIT1"/>
<dbReference type="Proteomes" id="UP000006548">
    <property type="component" value="Chromosome 5"/>
</dbReference>
<dbReference type="ExpressionAtlas" id="Q9FIT1">
    <property type="expression patterns" value="baseline and differential"/>
</dbReference>
<dbReference type="GO" id="GO:0005737">
    <property type="term" value="C:cytoplasm"/>
    <property type="evidence" value="ECO:0007669"/>
    <property type="project" value="UniProtKB-KW"/>
</dbReference>
<dbReference type="GO" id="GO:0005856">
    <property type="term" value="C:cytoskeleton"/>
    <property type="evidence" value="ECO:0000314"/>
    <property type="project" value="TAIR"/>
</dbReference>
<dbReference type="GO" id="GO:0005730">
    <property type="term" value="C:nucleolus"/>
    <property type="evidence" value="ECO:0000314"/>
    <property type="project" value="TAIR"/>
</dbReference>
<dbReference type="GO" id="GO:0005886">
    <property type="term" value="C:plasma membrane"/>
    <property type="evidence" value="ECO:0007669"/>
    <property type="project" value="UniProtKB-SubCell"/>
</dbReference>
<dbReference type="GO" id="GO:0005516">
    <property type="term" value="F:calmodulin binding"/>
    <property type="evidence" value="ECO:0007669"/>
    <property type="project" value="UniProtKB-KW"/>
</dbReference>
<dbReference type="GO" id="GO:0051592">
    <property type="term" value="P:response to calcium ion"/>
    <property type="evidence" value="ECO:0000270"/>
    <property type="project" value="TAIR"/>
</dbReference>
<dbReference type="CDD" id="cd23767">
    <property type="entry name" value="IQCD"/>
    <property type="match status" value="1"/>
</dbReference>
<dbReference type="Gene3D" id="1.20.5.190">
    <property type="match status" value="1"/>
</dbReference>
<dbReference type="InterPro" id="IPR025064">
    <property type="entry name" value="DUF4005"/>
</dbReference>
<dbReference type="InterPro" id="IPR000048">
    <property type="entry name" value="IQ_motif_EF-hand-BS"/>
</dbReference>
<dbReference type="InterPro" id="IPR027417">
    <property type="entry name" value="P-loop_NTPase"/>
</dbReference>
<dbReference type="PANTHER" id="PTHR32295">
    <property type="entry name" value="IQ-DOMAIN 5-RELATED"/>
    <property type="match status" value="1"/>
</dbReference>
<dbReference type="PANTHER" id="PTHR32295:SF286">
    <property type="entry name" value="PROTEIN IQ-DOMAIN 23"/>
    <property type="match status" value="1"/>
</dbReference>
<dbReference type="Pfam" id="PF13178">
    <property type="entry name" value="DUF4005"/>
    <property type="match status" value="1"/>
</dbReference>
<dbReference type="Pfam" id="PF00612">
    <property type="entry name" value="IQ"/>
    <property type="match status" value="2"/>
</dbReference>
<dbReference type="SMART" id="SM00015">
    <property type="entry name" value="IQ"/>
    <property type="match status" value="2"/>
</dbReference>
<dbReference type="SUPFAM" id="SSF52540">
    <property type="entry name" value="P-loop containing nucleoside triphosphate hydrolases"/>
    <property type="match status" value="1"/>
</dbReference>
<dbReference type="PROSITE" id="PS50096">
    <property type="entry name" value="IQ"/>
    <property type="match status" value="2"/>
</dbReference>
<name>IQD23_ARATH</name>
<feature type="chain" id="PRO_0000453128" description="Protein IQ-DOMAIN 23">
    <location>
        <begin position="1"/>
        <end position="403"/>
    </location>
</feature>
<feature type="domain" description="IQ 1" evidence="2">
    <location>
        <begin position="116"/>
        <end position="144"/>
    </location>
</feature>
<feature type="domain" description="IQ 2" evidence="2">
    <location>
        <begin position="145"/>
        <end position="167"/>
    </location>
</feature>
<feature type="region of interest" description="Disordered" evidence="4">
    <location>
        <begin position="1"/>
        <end position="43"/>
    </location>
</feature>
<feature type="region of interest" description="Calmodulin-binding" evidence="6">
    <location>
        <begin position="115"/>
        <end position="133"/>
    </location>
</feature>
<feature type="region of interest" description="Disordered" evidence="4">
    <location>
        <begin position="176"/>
        <end position="208"/>
    </location>
</feature>
<feature type="region of interest" description="Disordered" evidence="4">
    <location>
        <begin position="242"/>
        <end position="301"/>
    </location>
</feature>
<feature type="region of interest" description="Disordered" evidence="4">
    <location>
        <begin position="381"/>
        <end position="403"/>
    </location>
</feature>
<feature type="short sequence motif" description="Nuclear localization signal" evidence="3">
    <location>
        <begin position="10"/>
        <end position="17"/>
    </location>
</feature>
<feature type="compositionally biased region" description="Polar residues" evidence="4">
    <location>
        <begin position="27"/>
        <end position="43"/>
    </location>
</feature>
<feature type="compositionally biased region" description="Basic and acidic residues" evidence="4">
    <location>
        <begin position="257"/>
        <end position="267"/>
    </location>
</feature>
<feature type="sequence conflict" description="In Ref. 4; AAM65934." evidence="7" ref="4">
    <original>R</original>
    <variation>K</variation>
    <location>
        <position position="261"/>
    </location>
</feature>
<gene>
    <name evidence="6" type="primary">IQD23</name>
    <name evidence="8" type="ordered locus">At5g62070</name>
    <name evidence="9" type="ORF">MTG10.10</name>
</gene>
<reference key="1">
    <citation type="journal article" date="1998" name="DNA Res.">
        <title>Structural analysis of Arabidopsis thaliana chromosome 5. VII. Sequence features of the regions of 1,013,767 bp covered by sixteen physically assigned P1 and TAC clones.</title>
        <authorList>
            <person name="Nakamura Y."/>
            <person name="Sato S."/>
            <person name="Asamizu E."/>
            <person name="Kaneko T."/>
            <person name="Kotani H."/>
            <person name="Miyajima N."/>
            <person name="Tabata S."/>
        </authorList>
    </citation>
    <scope>NUCLEOTIDE SEQUENCE [LARGE SCALE GENOMIC DNA]</scope>
    <source>
        <strain>cv. Columbia</strain>
    </source>
</reference>
<reference key="2">
    <citation type="journal article" date="2017" name="Plant J.">
        <title>Araport11: a complete reannotation of the Arabidopsis thaliana reference genome.</title>
        <authorList>
            <person name="Cheng C.Y."/>
            <person name="Krishnakumar V."/>
            <person name="Chan A.P."/>
            <person name="Thibaud-Nissen F."/>
            <person name="Schobel S."/>
            <person name="Town C.D."/>
        </authorList>
    </citation>
    <scope>GENOME REANNOTATION</scope>
    <source>
        <strain>cv. Columbia</strain>
    </source>
</reference>
<reference key="3">
    <citation type="journal article" date="2003" name="Science">
        <title>Empirical analysis of transcriptional activity in the Arabidopsis genome.</title>
        <authorList>
            <person name="Yamada K."/>
            <person name="Lim J."/>
            <person name="Dale J.M."/>
            <person name="Chen H."/>
            <person name="Shinn P."/>
            <person name="Palm C.J."/>
            <person name="Southwick A.M."/>
            <person name="Wu H.C."/>
            <person name="Kim C.J."/>
            <person name="Nguyen M."/>
            <person name="Pham P.K."/>
            <person name="Cheuk R.F."/>
            <person name="Karlin-Newmann G."/>
            <person name="Liu S.X."/>
            <person name="Lam B."/>
            <person name="Sakano H."/>
            <person name="Wu T."/>
            <person name="Yu G."/>
            <person name="Miranda M."/>
            <person name="Quach H.L."/>
            <person name="Tripp M."/>
            <person name="Chang C.H."/>
            <person name="Lee J.M."/>
            <person name="Toriumi M.J."/>
            <person name="Chan M.M."/>
            <person name="Tang C.C."/>
            <person name="Onodera C.S."/>
            <person name="Deng J.M."/>
            <person name="Akiyama K."/>
            <person name="Ansari Y."/>
            <person name="Arakawa T."/>
            <person name="Banh J."/>
            <person name="Banno F."/>
            <person name="Bowser L."/>
            <person name="Brooks S.Y."/>
            <person name="Carninci P."/>
            <person name="Chao Q."/>
            <person name="Choy N."/>
            <person name="Enju A."/>
            <person name="Goldsmith A.D."/>
            <person name="Gurjal M."/>
            <person name="Hansen N.F."/>
            <person name="Hayashizaki Y."/>
            <person name="Johnson-Hopson C."/>
            <person name="Hsuan V.W."/>
            <person name="Iida K."/>
            <person name="Karnes M."/>
            <person name="Khan S."/>
            <person name="Koesema E."/>
            <person name="Ishida J."/>
            <person name="Jiang P.X."/>
            <person name="Jones T."/>
            <person name="Kawai J."/>
            <person name="Kamiya A."/>
            <person name="Meyers C."/>
            <person name="Nakajima M."/>
            <person name="Narusaka M."/>
            <person name="Seki M."/>
            <person name="Sakurai T."/>
            <person name="Satou M."/>
            <person name="Tamse R."/>
            <person name="Vaysberg M."/>
            <person name="Wallender E.K."/>
            <person name="Wong C."/>
            <person name="Yamamura Y."/>
            <person name="Yuan S."/>
            <person name="Shinozaki K."/>
            <person name="Davis R.W."/>
            <person name="Theologis A."/>
            <person name="Ecker J.R."/>
        </authorList>
    </citation>
    <scope>NUCLEOTIDE SEQUENCE [LARGE SCALE MRNA]</scope>
    <source>
        <strain>cv. Columbia</strain>
    </source>
</reference>
<reference key="4">
    <citation type="submission" date="2002-03" db="EMBL/GenBank/DDBJ databases">
        <title>Full-length cDNA from Arabidopsis thaliana.</title>
        <authorList>
            <person name="Brover V.V."/>
            <person name="Troukhan M.E."/>
            <person name="Alexandrov N.A."/>
            <person name="Lu Y.-P."/>
            <person name="Flavell R.B."/>
            <person name="Feldmann K.A."/>
        </authorList>
    </citation>
    <scope>NUCLEOTIDE SEQUENCE [LARGE SCALE MRNA]</scope>
</reference>
<reference key="5">
    <citation type="journal article" date="2005" name="BMC Evol. Biol.">
        <title>Genome-wide comparative analysis of the IQD gene families in Arabidopsis thaliana and Oryza sativa.</title>
        <authorList>
            <person name="Abel S."/>
            <person name="Savchenko T."/>
            <person name="Levy M."/>
        </authorList>
    </citation>
    <scope>INTERACTION WITH CALMODULIN</scope>
    <scope>GENE FAMILY</scope>
    <scope>NOMENCLATURE</scope>
    <source>
        <strain>cv. Columbia</strain>
    </source>
</reference>
<reference key="6">
    <citation type="journal article" date="2017" name="Plant Physiol.">
        <title>The IQD family of calmodulin-binding proteins links calcium signaling to microtubules, membrane subdomains, and the nucleus.</title>
        <authorList>
            <person name="Buerstenbinder K."/>
            <person name="Moeller B."/>
            <person name="Ploetner R."/>
            <person name="Stamm G."/>
            <person name="Hause G."/>
            <person name="Mitra D."/>
            <person name="Abel S."/>
        </authorList>
    </citation>
    <scope>SUBCELLULAR LOCATION</scope>
    <source>
        <strain>cv. Columbia</strain>
    </source>
</reference>
<reference key="7">
    <citation type="journal article" date="2017" name="Plant Signal. Behav.">
        <title>Functions of IQD proteins as hubs in cellular calcium and auxin signaling: A toolbox for shape formation and tissue-specification in plants?</title>
        <authorList>
            <person name="Buerstenbinder K."/>
            <person name="Mitra D."/>
            <person name="Quegwer J."/>
        </authorList>
    </citation>
    <scope>REVIEW</scope>
</reference>
<sequence>MGFFGRLFGSKKKSDKAASSRDKRRWSFTTRSSNSSKRAPAVTSASVVEQNGLDADKHAIAVAAATAAVAEAALTAAHAAAEVVRLTSGNGGRNVGGGGNSSVFQIGRSNRRWAQENIAAMKIQSAFRGYLARRALRALKALVKLQALVRGHIVRKQTADMLRRMQTLVRLQSQARARASRSSHSSASFHSSTALLFPSSSSSPRSLHTRCVSNAEVSSLDHRGGSKRLDWQAEESENGDKILEVDTWKPHYHPKPLRSERNNESPRKRQQSLLGPRSTENSPQVGSSGSRRRTPFTPTSRSEYSWGCNNYYYSGYHPNYMANTESYKAKVRSQSAPKQRVEVSNETSGYKRSVQGQYYYYTAVEEESLDVGSAGYYGGGGGDSDRLNRNQSAKSRMHSSFLV</sequence>
<keyword id="KW-0112">Calmodulin-binding</keyword>
<keyword id="KW-1003">Cell membrane</keyword>
<keyword id="KW-0963">Cytoplasm</keyword>
<keyword id="KW-0206">Cytoskeleton</keyword>
<keyword id="KW-0472">Membrane</keyword>
<keyword id="KW-0539">Nucleus</keyword>
<keyword id="KW-1185">Reference proteome</keyword>
<keyword id="KW-0677">Repeat</keyword>
<evidence type="ECO:0000250" key="1">
    <source>
        <dbReference type="UniProtKB" id="Q9SF32"/>
    </source>
</evidence>
<evidence type="ECO:0000255" key="2">
    <source>
        <dbReference type="PROSITE-ProRule" id="PRU00116"/>
    </source>
</evidence>
<evidence type="ECO:0000255" key="3">
    <source>
        <dbReference type="PROSITE-ProRule" id="PRU00768"/>
    </source>
</evidence>
<evidence type="ECO:0000256" key="4">
    <source>
        <dbReference type="SAM" id="MobiDB-lite"/>
    </source>
</evidence>
<evidence type="ECO:0000269" key="5">
    <source>
    </source>
</evidence>
<evidence type="ECO:0000303" key="6">
    <source>
    </source>
</evidence>
<evidence type="ECO:0000305" key="7"/>
<evidence type="ECO:0000312" key="8">
    <source>
        <dbReference type="Araport" id="AT5G62070"/>
    </source>
</evidence>
<evidence type="ECO:0000312" key="9">
    <source>
        <dbReference type="EMBL" id="AED97558.1"/>
    </source>
</evidence>
<organism>
    <name type="scientific">Arabidopsis thaliana</name>
    <name type="common">Mouse-ear cress</name>
    <dbReference type="NCBI Taxonomy" id="3702"/>
    <lineage>
        <taxon>Eukaryota</taxon>
        <taxon>Viridiplantae</taxon>
        <taxon>Streptophyta</taxon>
        <taxon>Embryophyta</taxon>
        <taxon>Tracheophyta</taxon>
        <taxon>Spermatophyta</taxon>
        <taxon>Magnoliopsida</taxon>
        <taxon>eudicotyledons</taxon>
        <taxon>Gunneridae</taxon>
        <taxon>Pentapetalae</taxon>
        <taxon>rosids</taxon>
        <taxon>malvids</taxon>
        <taxon>Brassicales</taxon>
        <taxon>Brassicaceae</taxon>
        <taxon>Camelineae</taxon>
        <taxon>Arabidopsis</taxon>
    </lineage>
</organism>
<protein>
    <recommendedName>
        <fullName evidence="6">Protein IQ-DOMAIN 23</fullName>
        <shortName evidence="6">AtIQD23</shortName>
    </recommendedName>
</protein>
<proteinExistence type="evidence at protein level"/>
<accession>Q9FIT1</accession>
<accession>Q8L9J4</accession>